<dbReference type="EC" id="2.1.3.2" evidence="1"/>
<dbReference type="EMBL" id="CP001087">
    <property type="protein sequence ID" value="ACN15868.1"/>
    <property type="molecule type" value="Genomic_DNA"/>
</dbReference>
<dbReference type="RefSeq" id="WP_015904631.1">
    <property type="nucleotide sequence ID" value="NC_012108.1"/>
</dbReference>
<dbReference type="SMR" id="C0QJ55"/>
<dbReference type="STRING" id="177437.HRM2_27780"/>
<dbReference type="KEGG" id="dat:HRM2_27780"/>
<dbReference type="eggNOG" id="COG0540">
    <property type="taxonomic scope" value="Bacteria"/>
</dbReference>
<dbReference type="HOGENOM" id="CLU_043846_2_0_7"/>
<dbReference type="OrthoDB" id="9774690at2"/>
<dbReference type="UniPathway" id="UPA00070">
    <property type="reaction ID" value="UER00116"/>
</dbReference>
<dbReference type="Proteomes" id="UP000000442">
    <property type="component" value="Chromosome"/>
</dbReference>
<dbReference type="GO" id="GO:0005829">
    <property type="term" value="C:cytosol"/>
    <property type="evidence" value="ECO:0007669"/>
    <property type="project" value="TreeGrafter"/>
</dbReference>
<dbReference type="GO" id="GO:0016597">
    <property type="term" value="F:amino acid binding"/>
    <property type="evidence" value="ECO:0007669"/>
    <property type="project" value="InterPro"/>
</dbReference>
<dbReference type="GO" id="GO:0004070">
    <property type="term" value="F:aspartate carbamoyltransferase activity"/>
    <property type="evidence" value="ECO:0007669"/>
    <property type="project" value="UniProtKB-UniRule"/>
</dbReference>
<dbReference type="GO" id="GO:0006207">
    <property type="term" value="P:'de novo' pyrimidine nucleobase biosynthetic process"/>
    <property type="evidence" value="ECO:0007669"/>
    <property type="project" value="InterPro"/>
</dbReference>
<dbReference type="GO" id="GO:0044205">
    <property type="term" value="P:'de novo' UMP biosynthetic process"/>
    <property type="evidence" value="ECO:0007669"/>
    <property type="project" value="UniProtKB-UniRule"/>
</dbReference>
<dbReference type="GO" id="GO:0006520">
    <property type="term" value="P:amino acid metabolic process"/>
    <property type="evidence" value="ECO:0007669"/>
    <property type="project" value="InterPro"/>
</dbReference>
<dbReference type="FunFam" id="3.40.50.1370:FF:000007">
    <property type="entry name" value="Aspartate carbamoyltransferase"/>
    <property type="match status" value="1"/>
</dbReference>
<dbReference type="Gene3D" id="3.40.50.1370">
    <property type="entry name" value="Aspartate/ornithine carbamoyltransferase"/>
    <property type="match status" value="2"/>
</dbReference>
<dbReference type="HAMAP" id="MF_00001">
    <property type="entry name" value="Asp_carb_tr"/>
    <property type="match status" value="1"/>
</dbReference>
<dbReference type="InterPro" id="IPR006132">
    <property type="entry name" value="Asp/Orn_carbamoyltranf_P-bd"/>
</dbReference>
<dbReference type="InterPro" id="IPR006130">
    <property type="entry name" value="Asp/Orn_carbamoylTrfase"/>
</dbReference>
<dbReference type="InterPro" id="IPR036901">
    <property type="entry name" value="Asp/Orn_carbamoylTrfase_sf"/>
</dbReference>
<dbReference type="InterPro" id="IPR002082">
    <property type="entry name" value="Asp_carbamoyltransf"/>
</dbReference>
<dbReference type="InterPro" id="IPR006131">
    <property type="entry name" value="Asp_carbamoyltransf_Asp/Orn-bd"/>
</dbReference>
<dbReference type="NCBIfam" id="TIGR00670">
    <property type="entry name" value="asp_carb_tr"/>
    <property type="match status" value="1"/>
</dbReference>
<dbReference type="NCBIfam" id="NF002032">
    <property type="entry name" value="PRK00856.1"/>
    <property type="match status" value="1"/>
</dbReference>
<dbReference type="PANTHER" id="PTHR45753:SF6">
    <property type="entry name" value="ASPARTATE CARBAMOYLTRANSFERASE"/>
    <property type="match status" value="1"/>
</dbReference>
<dbReference type="PANTHER" id="PTHR45753">
    <property type="entry name" value="ORNITHINE CARBAMOYLTRANSFERASE, MITOCHONDRIAL"/>
    <property type="match status" value="1"/>
</dbReference>
<dbReference type="Pfam" id="PF00185">
    <property type="entry name" value="OTCace"/>
    <property type="match status" value="1"/>
</dbReference>
<dbReference type="Pfam" id="PF02729">
    <property type="entry name" value="OTCace_N"/>
    <property type="match status" value="1"/>
</dbReference>
<dbReference type="PRINTS" id="PR00100">
    <property type="entry name" value="AOTCASE"/>
</dbReference>
<dbReference type="PRINTS" id="PR00101">
    <property type="entry name" value="ATCASE"/>
</dbReference>
<dbReference type="SUPFAM" id="SSF53671">
    <property type="entry name" value="Aspartate/ornithine carbamoyltransferase"/>
    <property type="match status" value="1"/>
</dbReference>
<dbReference type="PROSITE" id="PS00097">
    <property type="entry name" value="CARBAMOYLTRANSFERASE"/>
    <property type="match status" value="1"/>
</dbReference>
<gene>
    <name evidence="1" type="primary">pyrB</name>
    <name type="ordered locus">HRM2_27780</name>
</gene>
<keyword id="KW-0665">Pyrimidine biosynthesis</keyword>
<keyword id="KW-1185">Reference proteome</keyword>
<keyword id="KW-0808">Transferase</keyword>
<reference key="1">
    <citation type="journal article" date="2009" name="Environ. Microbiol.">
        <title>Genome sequence of Desulfobacterium autotrophicum HRM2, a marine sulfate reducer oxidizing organic carbon completely to carbon dioxide.</title>
        <authorList>
            <person name="Strittmatter A.W."/>
            <person name="Liesegang H."/>
            <person name="Rabus R."/>
            <person name="Decker I."/>
            <person name="Amann J."/>
            <person name="Andres S."/>
            <person name="Henne A."/>
            <person name="Fricke W.F."/>
            <person name="Martinez-Arias R."/>
            <person name="Bartels D."/>
            <person name="Goesmann A."/>
            <person name="Krause L."/>
            <person name="Puehler A."/>
            <person name="Klenk H.P."/>
            <person name="Richter M."/>
            <person name="Schuler M."/>
            <person name="Gloeckner F.O."/>
            <person name="Meyerdierks A."/>
            <person name="Gottschalk G."/>
            <person name="Amann R."/>
        </authorList>
    </citation>
    <scope>NUCLEOTIDE SEQUENCE [LARGE SCALE GENOMIC DNA]</scope>
    <source>
        <strain>ATCC 43914 / DSM 3382 / VKM B-1955 / HRM2</strain>
    </source>
</reference>
<feature type="chain" id="PRO_1000201588" description="Aspartate carbamoyltransferase catalytic subunit">
    <location>
        <begin position="1"/>
        <end position="312"/>
    </location>
</feature>
<feature type="binding site" evidence="1">
    <location>
        <position position="58"/>
    </location>
    <ligand>
        <name>carbamoyl phosphate</name>
        <dbReference type="ChEBI" id="CHEBI:58228"/>
    </ligand>
</feature>
<feature type="binding site" evidence="1">
    <location>
        <position position="59"/>
    </location>
    <ligand>
        <name>carbamoyl phosphate</name>
        <dbReference type="ChEBI" id="CHEBI:58228"/>
    </ligand>
</feature>
<feature type="binding site" evidence="1">
    <location>
        <position position="86"/>
    </location>
    <ligand>
        <name>L-aspartate</name>
        <dbReference type="ChEBI" id="CHEBI:29991"/>
    </ligand>
</feature>
<feature type="binding site" evidence="1">
    <location>
        <position position="108"/>
    </location>
    <ligand>
        <name>carbamoyl phosphate</name>
        <dbReference type="ChEBI" id="CHEBI:58228"/>
    </ligand>
</feature>
<feature type="binding site" evidence="1">
    <location>
        <position position="136"/>
    </location>
    <ligand>
        <name>carbamoyl phosphate</name>
        <dbReference type="ChEBI" id="CHEBI:58228"/>
    </ligand>
</feature>
<feature type="binding site" evidence="1">
    <location>
        <position position="139"/>
    </location>
    <ligand>
        <name>carbamoyl phosphate</name>
        <dbReference type="ChEBI" id="CHEBI:58228"/>
    </ligand>
</feature>
<feature type="binding site" evidence="1">
    <location>
        <position position="169"/>
    </location>
    <ligand>
        <name>L-aspartate</name>
        <dbReference type="ChEBI" id="CHEBI:29991"/>
    </ligand>
</feature>
<feature type="binding site" evidence="1">
    <location>
        <position position="223"/>
    </location>
    <ligand>
        <name>L-aspartate</name>
        <dbReference type="ChEBI" id="CHEBI:29991"/>
    </ligand>
</feature>
<feature type="binding site" evidence="1">
    <location>
        <position position="264"/>
    </location>
    <ligand>
        <name>carbamoyl phosphate</name>
        <dbReference type="ChEBI" id="CHEBI:58228"/>
    </ligand>
</feature>
<feature type="binding site" evidence="1">
    <location>
        <position position="265"/>
    </location>
    <ligand>
        <name>carbamoyl phosphate</name>
        <dbReference type="ChEBI" id="CHEBI:58228"/>
    </ligand>
</feature>
<protein>
    <recommendedName>
        <fullName evidence="1">Aspartate carbamoyltransferase catalytic subunit</fullName>
        <ecNumber evidence="1">2.1.3.2</ecNumber>
    </recommendedName>
    <alternativeName>
        <fullName evidence="1">Aspartate transcarbamylase</fullName>
        <shortName evidence="1">ATCase</shortName>
    </alternativeName>
</protein>
<evidence type="ECO:0000255" key="1">
    <source>
        <dbReference type="HAMAP-Rule" id="MF_00001"/>
    </source>
</evidence>
<organism>
    <name type="scientific">Desulforapulum autotrophicum (strain ATCC 43914 / DSM 3382 / VKM B-1955 / HRM2)</name>
    <name type="common">Desulfobacterium autotrophicum</name>
    <dbReference type="NCBI Taxonomy" id="177437"/>
    <lineage>
        <taxon>Bacteria</taxon>
        <taxon>Pseudomonadati</taxon>
        <taxon>Thermodesulfobacteriota</taxon>
        <taxon>Desulfobacteria</taxon>
        <taxon>Desulfobacterales</taxon>
        <taxon>Desulfobacteraceae</taxon>
        <taxon>Desulforapulum</taxon>
    </lineage>
</organism>
<comment type="function">
    <text evidence="1">Catalyzes the condensation of carbamoyl phosphate and aspartate to form carbamoyl aspartate and inorganic phosphate, the committed step in the de novo pyrimidine nucleotide biosynthesis pathway.</text>
</comment>
<comment type="catalytic activity">
    <reaction evidence="1">
        <text>carbamoyl phosphate + L-aspartate = N-carbamoyl-L-aspartate + phosphate + H(+)</text>
        <dbReference type="Rhea" id="RHEA:20013"/>
        <dbReference type="ChEBI" id="CHEBI:15378"/>
        <dbReference type="ChEBI" id="CHEBI:29991"/>
        <dbReference type="ChEBI" id="CHEBI:32814"/>
        <dbReference type="ChEBI" id="CHEBI:43474"/>
        <dbReference type="ChEBI" id="CHEBI:58228"/>
        <dbReference type="EC" id="2.1.3.2"/>
    </reaction>
</comment>
<comment type="pathway">
    <text evidence="1">Pyrimidine metabolism; UMP biosynthesis via de novo pathway; (S)-dihydroorotate from bicarbonate: step 2/3.</text>
</comment>
<comment type="subunit">
    <text evidence="1">Heterododecamer (2C3:3R2) of six catalytic PyrB chains organized as two trimers (C3), and six regulatory PyrI chains organized as three dimers (R2).</text>
</comment>
<comment type="similarity">
    <text evidence="1">Belongs to the aspartate/ornithine carbamoyltransferase superfamily. ATCase family.</text>
</comment>
<accession>C0QJ55</accession>
<name>PYRB_DESAH</name>
<proteinExistence type="inferred from homology"/>
<sequence length="312" mass="33862">MRFEHKDILDMESLSVQDITMILDTAEGMKEISKRPVKKVPTLRGKTIVLLFQEPSTRTKSSFDIAAKRLSADSISLSKSTSSIVKGETLIDTARNLEAMNPDIIVLRHPSSGAPHLIAKHVNASVINAGDGIHAHPSQTLLDLMSVREKKGELQGLNISIVGDISHSRVARSNITGFTKMGANVTISAPATMIPRGIEALGCKVAPDMDSCIENADVIIMLRIQKERQENILFPTEREYAALFGLNAQRLKLAKPDVIVMHPGPLNRGVEISNQVADGRNSVILDQVTNGVAVRMALFYLVAGGSRNADTI</sequence>